<accession>Q7W2X5</accession>
<reference key="1">
    <citation type="journal article" date="2003" name="Nat. Genet.">
        <title>Comparative analysis of the genome sequences of Bordetella pertussis, Bordetella parapertussis and Bordetella bronchiseptica.</title>
        <authorList>
            <person name="Parkhill J."/>
            <person name="Sebaihia M."/>
            <person name="Preston A."/>
            <person name="Murphy L.D."/>
            <person name="Thomson N.R."/>
            <person name="Harris D.E."/>
            <person name="Holden M.T.G."/>
            <person name="Churcher C.M."/>
            <person name="Bentley S.D."/>
            <person name="Mungall K.L."/>
            <person name="Cerdeno-Tarraga A.-M."/>
            <person name="Temple L."/>
            <person name="James K.D."/>
            <person name="Harris B."/>
            <person name="Quail M.A."/>
            <person name="Achtman M."/>
            <person name="Atkin R."/>
            <person name="Baker S."/>
            <person name="Basham D."/>
            <person name="Bason N."/>
            <person name="Cherevach I."/>
            <person name="Chillingworth T."/>
            <person name="Collins M."/>
            <person name="Cronin A."/>
            <person name="Davis P."/>
            <person name="Doggett J."/>
            <person name="Feltwell T."/>
            <person name="Goble A."/>
            <person name="Hamlin N."/>
            <person name="Hauser H."/>
            <person name="Holroyd S."/>
            <person name="Jagels K."/>
            <person name="Leather S."/>
            <person name="Moule S."/>
            <person name="Norberczak H."/>
            <person name="O'Neil S."/>
            <person name="Ormond D."/>
            <person name="Price C."/>
            <person name="Rabbinowitsch E."/>
            <person name="Rutter S."/>
            <person name="Sanders M."/>
            <person name="Saunders D."/>
            <person name="Seeger K."/>
            <person name="Sharp S."/>
            <person name="Simmonds M."/>
            <person name="Skelton J."/>
            <person name="Squares R."/>
            <person name="Squares S."/>
            <person name="Stevens K."/>
            <person name="Unwin L."/>
            <person name="Whitehead S."/>
            <person name="Barrell B.G."/>
            <person name="Maskell D.J."/>
        </authorList>
    </citation>
    <scope>NUCLEOTIDE SEQUENCE [LARGE SCALE GENOMIC DNA]</scope>
    <source>
        <strain>12822 / ATCC BAA-587 / NCTC 13253</strain>
    </source>
</reference>
<organism>
    <name type="scientific">Bordetella parapertussis (strain 12822 / ATCC BAA-587 / NCTC 13253)</name>
    <dbReference type="NCBI Taxonomy" id="257311"/>
    <lineage>
        <taxon>Bacteria</taxon>
        <taxon>Pseudomonadati</taxon>
        <taxon>Pseudomonadota</taxon>
        <taxon>Betaproteobacteria</taxon>
        <taxon>Burkholderiales</taxon>
        <taxon>Alcaligenaceae</taxon>
        <taxon>Bordetella</taxon>
    </lineage>
</organism>
<proteinExistence type="inferred from homology"/>
<comment type="function">
    <text evidence="1">Part of the twin-arginine translocation (Tat) system that transports large folded proteins containing a characteristic twin-arginine motif in their signal peptide across membranes. TatA could form the protein-conducting channel of the Tat system.</text>
</comment>
<comment type="subunit">
    <text evidence="1">The Tat system comprises two distinct complexes: a TatABC complex, containing multiple copies of TatA, TatB and TatC subunits, and a separate TatA complex, containing only TatA subunits. Substrates initially bind to the TatABC complex, which probably triggers association of the separate TatA complex to form the active translocon.</text>
</comment>
<comment type="subcellular location">
    <subcellularLocation>
        <location evidence="1">Cell inner membrane</location>
        <topology evidence="1">Single-pass membrane protein</topology>
    </subcellularLocation>
</comment>
<comment type="similarity">
    <text evidence="1">Belongs to the TatA/E family.</text>
</comment>
<keyword id="KW-0997">Cell inner membrane</keyword>
<keyword id="KW-1003">Cell membrane</keyword>
<keyword id="KW-0472">Membrane</keyword>
<keyword id="KW-0653">Protein transport</keyword>
<keyword id="KW-0811">Translocation</keyword>
<keyword id="KW-0812">Transmembrane</keyword>
<keyword id="KW-1133">Transmembrane helix</keyword>
<keyword id="KW-0813">Transport</keyword>
<feature type="chain" id="PRO_1000044355" description="Sec-independent protein translocase protein TatA">
    <location>
        <begin position="1"/>
        <end position="75"/>
    </location>
</feature>
<feature type="transmembrane region" description="Helical" evidence="1">
    <location>
        <begin position="1"/>
        <end position="21"/>
    </location>
</feature>
<feature type="region of interest" description="Disordered" evidence="2">
    <location>
        <begin position="45"/>
        <end position="75"/>
    </location>
</feature>
<gene>
    <name evidence="1" type="primary">tatA</name>
    <name type="ordered locus">BPP4276</name>
</gene>
<sequence>MGSFSIWHWLIVLVIIALVFGTKKLRNVGSDLGSAVKGFKEGMKDASADKPADQVTQQRVSDDTIDVQAKEKSNS</sequence>
<name>TATA_BORPA</name>
<dbReference type="EMBL" id="BX640436">
    <property type="protein sequence ID" value="CAE39555.1"/>
    <property type="molecule type" value="Genomic_DNA"/>
</dbReference>
<dbReference type="RefSeq" id="WP_003815808.1">
    <property type="nucleotide sequence ID" value="NC_002928.3"/>
</dbReference>
<dbReference type="SMR" id="Q7W2X5"/>
<dbReference type="DNASU" id="1665306"/>
<dbReference type="GeneID" id="93206073"/>
<dbReference type="KEGG" id="bpa:BPP4276"/>
<dbReference type="HOGENOM" id="CLU_086034_5_3_4"/>
<dbReference type="Proteomes" id="UP000001421">
    <property type="component" value="Chromosome"/>
</dbReference>
<dbReference type="GO" id="GO:0033281">
    <property type="term" value="C:TAT protein transport complex"/>
    <property type="evidence" value="ECO:0007669"/>
    <property type="project" value="UniProtKB-UniRule"/>
</dbReference>
<dbReference type="GO" id="GO:0008320">
    <property type="term" value="F:protein transmembrane transporter activity"/>
    <property type="evidence" value="ECO:0007669"/>
    <property type="project" value="UniProtKB-UniRule"/>
</dbReference>
<dbReference type="GO" id="GO:0043953">
    <property type="term" value="P:protein transport by the Tat complex"/>
    <property type="evidence" value="ECO:0007669"/>
    <property type="project" value="UniProtKB-UniRule"/>
</dbReference>
<dbReference type="Gene3D" id="1.20.5.3310">
    <property type="match status" value="1"/>
</dbReference>
<dbReference type="HAMAP" id="MF_00236">
    <property type="entry name" value="TatA_E"/>
    <property type="match status" value="1"/>
</dbReference>
<dbReference type="InterPro" id="IPR003369">
    <property type="entry name" value="TatA/B/E"/>
</dbReference>
<dbReference type="InterPro" id="IPR006312">
    <property type="entry name" value="TatA/E"/>
</dbReference>
<dbReference type="NCBIfam" id="NF002813">
    <property type="entry name" value="PRK02958.1"/>
    <property type="match status" value="1"/>
</dbReference>
<dbReference type="NCBIfam" id="TIGR01411">
    <property type="entry name" value="tatAE"/>
    <property type="match status" value="1"/>
</dbReference>
<dbReference type="PANTHER" id="PTHR42982">
    <property type="entry name" value="SEC-INDEPENDENT PROTEIN TRANSLOCASE PROTEIN TATA"/>
    <property type="match status" value="1"/>
</dbReference>
<dbReference type="PANTHER" id="PTHR42982:SF1">
    <property type="entry name" value="SEC-INDEPENDENT PROTEIN TRANSLOCASE PROTEIN TATA"/>
    <property type="match status" value="1"/>
</dbReference>
<dbReference type="Pfam" id="PF02416">
    <property type="entry name" value="TatA_B_E"/>
    <property type="match status" value="1"/>
</dbReference>
<evidence type="ECO:0000255" key="1">
    <source>
        <dbReference type="HAMAP-Rule" id="MF_00236"/>
    </source>
</evidence>
<evidence type="ECO:0000256" key="2">
    <source>
        <dbReference type="SAM" id="MobiDB-lite"/>
    </source>
</evidence>
<protein>
    <recommendedName>
        <fullName evidence="1">Sec-independent protein translocase protein TatA</fullName>
    </recommendedName>
</protein>